<organism>
    <name type="scientific">Escherichia coli (strain K12)</name>
    <dbReference type="NCBI Taxonomy" id="83333"/>
    <lineage>
        <taxon>Bacteria</taxon>
        <taxon>Pseudomonadati</taxon>
        <taxon>Pseudomonadota</taxon>
        <taxon>Gammaproteobacteria</taxon>
        <taxon>Enterobacterales</taxon>
        <taxon>Enterobacteriaceae</taxon>
        <taxon>Escherichia</taxon>
    </lineage>
</organism>
<name>ATOE_ECOLI</name>
<sequence>MIGRISRFMTRFVSRWLPDPLIFAMLLTLLTFVIALWLTPQTPISMVKMWGDGFWNLLAFGMQMALIIVTGHALASSAPVKSLLRTAASAAKTPVQGVMLVTFFGSVACVINWGFGLVVGAMFAREVARRVPGSDYPLLIACAYIGFLTWGGGFSGSMPLLAATPGNPVEHIAGLIPVGDTLFSGFNIFITVALIVVMPFITRMMMPKPSDVVSIDPKLLMEEADFQKQLPKDAPPSERLEESRILTLIIGALGIAYLAMYFSEHGFNITINTVNLMFMIAGLLLHKTPMAYMRAISAAARSTAGILVQFPFYAGIQLMMEHSGLGGLITEFFINVANKDTFPVMTFFSSALINFAVPSGGGHWVIQGPFVIPAAQALGADLGKSVMAIAYGEQWMNMAQPFWALPALAIAGLGVRDIMGYCITALLFSGVIFVIGLTLF</sequence>
<comment type="function">
    <text>May be responsible for the uptake of short-chain fatty acids.</text>
</comment>
<comment type="subcellular location">
    <subcellularLocation>
        <location>Cell inner membrane</location>
        <topology>Multi-pass membrane protein</topology>
    </subcellularLocation>
</comment>
<evidence type="ECO:0000255" key="1"/>
<gene>
    <name type="primary">atoE</name>
    <name type="ordered locus">b2223</name>
    <name type="ordered locus">JW2217</name>
</gene>
<dbReference type="EMBL" id="U00096">
    <property type="protein sequence ID" value="AAC75283.1"/>
    <property type="molecule type" value="Genomic_DNA"/>
</dbReference>
<dbReference type="EMBL" id="AP009048">
    <property type="protein sequence ID" value="BAA16019.1"/>
    <property type="molecule type" value="Genomic_DNA"/>
</dbReference>
<dbReference type="PIR" id="E64992">
    <property type="entry name" value="E64992"/>
</dbReference>
<dbReference type="RefSeq" id="NP_416727.1">
    <property type="nucleotide sequence ID" value="NC_000913.3"/>
</dbReference>
<dbReference type="RefSeq" id="WP_000580275.1">
    <property type="nucleotide sequence ID" value="NZ_STEB01000002.1"/>
</dbReference>
<dbReference type="BioGRID" id="4261814">
    <property type="interactions" value="7"/>
</dbReference>
<dbReference type="FunCoup" id="P76460">
    <property type="interactions" value="187"/>
</dbReference>
<dbReference type="STRING" id="511145.b2223"/>
<dbReference type="TCDB" id="2.A.73.1.1">
    <property type="family name" value="the short chain fatty acid uptake (atoe) family"/>
</dbReference>
<dbReference type="PaxDb" id="511145-b2223"/>
<dbReference type="EnsemblBacteria" id="AAC75283">
    <property type="protein sequence ID" value="AAC75283"/>
    <property type="gene ID" value="b2223"/>
</dbReference>
<dbReference type="GeneID" id="946721"/>
<dbReference type="KEGG" id="ecj:JW2217"/>
<dbReference type="KEGG" id="eco:b2223"/>
<dbReference type="KEGG" id="ecoc:C3026_12425"/>
<dbReference type="PATRIC" id="fig|1411691.4.peg.12"/>
<dbReference type="EchoBASE" id="EB1622"/>
<dbReference type="eggNOG" id="COG2031">
    <property type="taxonomic scope" value="Bacteria"/>
</dbReference>
<dbReference type="HOGENOM" id="CLU_037744_0_0_6"/>
<dbReference type="InParanoid" id="P76460"/>
<dbReference type="OMA" id="YSGFVIW"/>
<dbReference type="OrthoDB" id="9342495at2"/>
<dbReference type="PhylomeDB" id="P76460"/>
<dbReference type="BioCyc" id="EcoCyc:EG11671-MONOMER"/>
<dbReference type="BioCyc" id="MetaCyc:EG11671-MONOMER"/>
<dbReference type="PRO" id="PR:P76460"/>
<dbReference type="Proteomes" id="UP000000625">
    <property type="component" value="Chromosome"/>
</dbReference>
<dbReference type="GO" id="GO:0005886">
    <property type="term" value="C:plasma membrane"/>
    <property type="evidence" value="ECO:0000314"/>
    <property type="project" value="EcoCyc"/>
</dbReference>
<dbReference type="InterPro" id="IPR006161">
    <property type="entry name" value="CHP00366"/>
</dbReference>
<dbReference type="InterPro" id="IPR006160">
    <property type="entry name" value="SCFA_transpt_AtoE"/>
</dbReference>
<dbReference type="NCBIfam" id="TIGR00366">
    <property type="entry name" value="TIGR00366 family protein"/>
    <property type="match status" value="1"/>
</dbReference>
<dbReference type="PANTHER" id="PTHR41983">
    <property type="entry name" value="SHORT-CHAIN FATTY ACID TRANSPORTER-RELATED"/>
    <property type="match status" value="1"/>
</dbReference>
<dbReference type="PANTHER" id="PTHR41983:SF2">
    <property type="entry name" value="SHORT-CHAIN FATTY ACID TRANSPORTER-RELATED"/>
    <property type="match status" value="1"/>
</dbReference>
<dbReference type="Pfam" id="PF02667">
    <property type="entry name" value="SCFA_trans"/>
    <property type="match status" value="1"/>
</dbReference>
<protein>
    <recommendedName>
        <fullName>Putative short-chain fatty acid transporter</fullName>
    </recommendedName>
</protein>
<reference key="1">
    <citation type="journal article" date="1996" name="DNA Res.">
        <title>A 460-kb DNA sequence of the Escherichia coli K-12 genome corresponding to the 40.1-50.0 min region on the linkage map.</title>
        <authorList>
            <person name="Itoh T."/>
            <person name="Aiba H."/>
            <person name="Baba T."/>
            <person name="Fujita K."/>
            <person name="Hayashi K."/>
            <person name="Inada T."/>
            <person name="Isono K."/>
            <person name="Kasai H."/>
            <person name="Kimura S."/>
            <person name="Kitakawa M."/>
            <person name="Kitagawa M."/>
            <person name="Makino K."/>
            <person name="Miki T."/>
            <person name="Mizobuchi K."/>
            <person name="Mori H."/>
            <person name="Mori T."/>
            <person name="Motomura K."/>
            <person name="Nakade S."/>
            <person name="Nakamura Y."/>
            <person name="Nashimoto H."/>
            <person name="Nishio Y."/>
            <person name="Oshima T."/>
            <person name="Saito N."/>
            <person name="Sampei G."/>
            <person name="Seki Y."/>
            <person name="Sivasundaram S."/>
            <person name="Tagami H."/>
            <person name="Takeda J."/>
            <person name="Takemoto K."/>
            <person name="Wada C."/>
            <person name="Yamamoto Y."/>
            <person name="Horiuchi T."/>
        </authorList>
    </citation>
    <scope>NUCLEOTIDE SEQUENCE [LARGE SCALE GENOMIC DNA]</scope>
    <source>
        <strain>K12 / W3110 / ATCC 27325 / DSM 5911</strain>
    </source>
</reference>
<reference key="2">
    <citation type="journal article" date="1997" name="Science">
        <title>The complete genome sequence of Escherichia coli K-12.</title>
        <authorList>
            <person name="Blattner F.R."/>
            <person name="Plunkett G. III"/>
            <person name="Bloch C.A."/>
            <person name="Perna N.T."/>
            <person name="Burland V."/>
            <person name="Riley M."/>
            <person name="Collado-Vides J."/>
            <person name="Glasner J.D."/>
            <person name="Rode C.K."/>
            <person name="Mayhew G.F."/>
            <person name="Gregor J."/>
            <person name="Davis N.W."/>
            <person name="Kirkpatrick H.A."/>
            <person name="Goeden M.A."/>
            <person name="Rose D.J."/>
            <person name="Mau B."/>
            <person name="Shao Y."/>
        </authorList>
    </citation>
    <scope>NUCLEOTIDE SEQUENCE [LARGE SCALE GENOMIC DNA]</scope>
    <source>
        <strain>K12 / MG1655 / ATCC 47076</strain>
    </source>
</reference>
<reference key="3">
    <citation type="journal article" date="2006" name="Mol. Syst. Biol.">
        <title>Highly accurate genome sequences of Escherichia coli K-12 strains MG1655 and W3110.</title>
        <authorList>
            <person name="Hayashi K."/>
            <person name="Morooka N."/>
            <person name="Yamamoto Y."/>
            <person name="Fujita K."/>
            <person name="Isono K."/>
            <person name="Choi S."/>
            <person name="Ohtsubo E."/>
            <person name="Baba T."/>
            <person name="Wanner B.L."/>
            <person name="Mori H."/>
            <person name="Horiuchi T."/>
        </authorList>
    </citation>
    <scope>NUCLEOTIDE SEQUENCE [LARGE SCALE GENOMIC DNA]</scope>
    <source>
        <strain>K12 / W3110 / ATCC 27325 / DSM 5911</strain>
    </source>
</reference>
<reference key="4">
    <citation type="journal article" date="2005" name="Science">
        <title>Global topology analysis of the Escherichia coli inner membrane proteome.</title>
        <authorList>
            <person name="Daley D.O."/>
            <person name="Rapp M."/>
            <person name="Granseth E."/>
            <person name="Melen K."/>
            <person name="Drew D."/>
            <person name="von Heijne G."/>
        </authorList>
    </citation>
    <scope>TOPOLOGY [LARGE SCALE ANALYSIS]</scope>
    <source>
        <strain>K12 / MG1655 / ATCC 47076</strain>
    </source>
</reference>
<proteinExistence type="evidence at protein level"/>
<feature type="chain" id="PRO_0000064733" description="Putative short-chain fatty acid transporter">
    <location>
        <begin position="1"/>
        <end position="440"/>
    </location>
</feature>
<feature type="topological domain" description="Periplasmic" evidence="1">
    <location>
        <begin position="1"/>
        <end position="19"/>
    </location>
</feature>
<feature type="transmembrane region" description="Helical" evidence="1">
    <location>
        <begin position="20"/>
        <end position="40"/>
    </location>
</feature>
<feature type="topological domain" description="Cytoplasmic" evidence="1">
    <location>
        <begin position="41"/>
        <end position="53"/>
    </location>
</feature>
<feature type="transmembrane region" description="Helical" evidence="1">
    <location>
        <begin position="54"/>
        <end position="74"/>
    </location>
</feature>
<feature type="topological domain" description="Periplasmic" evidence="1">
    <location>
        <begin position="75"/>
        <end position="102"/>
    </location>
</feature>
<feature type="transmembrane region" description="Helical" evidence="1">
    <location>
        <begin position="103"/>
        <end position="123"/>
    </location>
</feature>
<feature type="topological domain" description="Cytoplasmic" evidence="1">
    <location>
        <begin position="124"/>
        <end position="137"/>
    </location>
</feature>
<feature type="transmembrane region" description="Helical" evidence="1">
    <location>
        <begin position="138"/>
        <end position="158"/>
    </location>
</feature>
<feature type="transmembrane region" description="Helical" evidence="1">
    <location>
        <begin position="159"/>
        <end position="179"/>
    </location>
</feature>
<feature type="topological domain" description="Cytoplasmic" evidence="1">
    <location>
        <position position="180"/>
    </location>
</feature>
<feature type="transmembrane region" description="Helical" evidence="1">
    <location>
        <begin position="181"/>
        <end position="201"/>
    </location>
</feature>
<feature type="topological domain" description="Periplasmic" evidence="1">
    <location>
        <begin position="202"/>
        <end position="244"/>
    </location>
</feature>
<feature type="transmembrane region" description="Helical" evidence="1">
    <location>
        <begin position="245"/>
        <end position="265"/>
    </location>
</feature>
<feature type="transmembrane region" description="Helical" evidence="1">
    <location>
        <begin position="266"/>
        <end position="286"/>
    </location>
</feature>
<feature type="topological domain" description="Periplasmic" evidence="1">
    <location>
        <begin position="287"/>
        <end position="313"/>
    </location>
</feature>
<feature type="transmembrane region" description="Helical" evidence="1">
    <location>
        <begin position="314"/>
        <end position="334"/>
    </location>
</feature>
<feature type="topological domain" description="Cytoplasmic" evidence="1">
    <location>
        <begin position="335"/>
        <end position="351"/>
    </location>
</feature>
<feature type="transmembrane region" description="Helical" evidence="1">
    <location>
        <begin position="352"/>
        <end position="372"/>
    </location>
</feature>
<feature type="topological domain" description="Periplasmic" evidence="1">
    <location>
        <begin position="373"/>
        <end position="394"/>
    </location>
</feature>
<feature type="transmembrane region" description="Helical" evidence="1">
    <location>
        <begin position="395"/>
        <end position="415"/>
    </location>
</feature>
<feature type="topological domain" description="Cytoplasmic" evidence="1">
    <location>
        <begin position="416"/>
        <end position="419"/>
    </location>
</feature>
<feature type="transmembrane region" description="Helical" evidence="1">
    <location>
        <begin position="420"/>
        <end position="440"/>
    </location>
</feature>
<accession>P76460</accession>
<keyword id="KW-0997">Cell inner membrane</keyword>
<keyword id="KW-1003">Cell membrane</keyword>
<keyword id="KW-0472">Membrane</keyword>
<keyword id="KW-1185">Reference proteome</keyword>
<keyword id="KW-0812">Transmembrane</keyword>
<keyword id="KW-1133">Transmembrane helix</keyword>
<keyword id="KW-0813">Transport</keyword>